<name>YR034_MIMIV</name>
<proteinExistence type="inferred from homology"/>
<comment type="similarity">
    <text evidence="1">Belongs to the mimivirus L17x/L18x family.</text>
</comment>
<accession>Q5UPB0</accession>
<evidence type="ECO:0000305" key="1"/>
<feature type="chain" id="PRO_0000071188" description="Uncharacterized protein R34">
    <location>
        <begin position="1"/>
        <end position="409"/>
    </location>
</feature>
<dbReference type="EMBL" id="AY653733">
    <property type="protein sequence ID" value="AAV50309.1"/>
    <property type="molecule type" value="Genomic_DNA"/>
</dbReference>
<dbReference type="KEGG" id="vg:9924614"/>
<dbReference type="Proteomes" id="UP000001134">
    <property type="component" value="Genome"/>
</dbReference>
<sequence length="409" mass="48243">MQHYTFCLCDGMYCPSKEYILKYCENNGNNYYINDSDNLIPINFSVYDYDNCGNYFTFNCILVDFENILKFNGFIARKKLSDILNVHMDKCKRSAFVIDYLDHITKNNTIKHIKYYLGNNYYNITCWNYYLQSKIFRYSDLSSIRSCLKYLPVDRISGYLVDCLIRNDNVILDYLVDKIIIYLRLSFTHKKYKGNMFKITDNNDKLSDILNVNCVMESIIHECANNNTIESYHQTIDRFQELLESQENVKVKKDLITKHNKLKLGFTLNDKTLNYLLGYILMERNGNPLIIVKQLLMDGANIYTEIDRDFGFTFFDQTITIIISNENLELLDILFEMKLISQDKLNYILEKSIGELNLKKDVKTINSKEFIRELSGYGADVDKYVDKLIKKANKYNNNKLVDYLKDLKD</sequence>
<gene>
    <name type="ordered locus">MIMI_R34</name>
</gene>
<organism>
    <name type="scientific">Acanthamoeba polyphaga mimivirus</name>
    <name type="common">APMV</name>
    <dbReference type="NCBI Taxonomy" id="212035"/>
    <lineage>
        <taxon>Viruses</taxon>
        <taxon>Varidnaviria</taxon>
        <taxon>Bamfordvirae</taxon>
        <taxon>Nucleocytoviricota</taxon>
        <taxon>Megaviricetes</taxon>
        <taxon>Imitervirales</taxon>
        <taxon>Mimiviridae</taxon>
        <taxon>Megamimivirinae</taxon>
        <taxon>Mimivirus</taxon>
        <taxon>Mimivirus bradfordmassiliense</taxon>
    </lineage>
</organism>
<protein>
    <recommendedName>
        <fullName>Uncharacterized protein R34</fullName>
    </recommendedName>
</protein>
<reference key="1">
    <citation type="journal article" date="2004" name="Science">
        <title>The 1.2-megabase genome sequence of Mimivirus.</title>
        <authorList>
            <person name="Raoult D."/>
            <person name="Audic S."/>
            <person name="Robert C."/>
            <person name="Abergel C."/>
            <person name="Renesto P."/>
            <person name="Ogata H."/>
            <person name="La Scola B."/>
            <person name="Susan M."/>
            <person name="Claverie J.-M."/>
        </authorList>
    </citation>
    <scope>NUCLEOTIDE SEQUENCE [LARGE SCALE GENOMIC DNA]</scope>
    <source>
        <strain>Rowbotham-Bradford</strain>
    </source>
</reference>
<organismHost>
    <name type="scientific">Acanthamoeba polyphaga</name>
    <name type="common">Amoeba</name>
    <dbReference type="NCBI Taxonomy" id="5757"/>
</organismHost>
<keyword id="KW-1185">Reference proteome</keyword>